<dbReference type="EC" id="1.1.5.4" evidence="1"/>
<dbReference type="EMBL" id="CP000903">
    <property type="protein sequence ID" value="ABY43968.1"/>
    <property type="molecule type" value="Genomic_DNA"/>
</dbReference>
<dbReference type="SMR" id="A9VJG1"/>
<dbReference type="KEGG" id="bwe:BcerKBAB4_2768"/>
<dbReference type="eggNOG" id="COG0579">
    <property type="taxonomic scope" value="Bacteria"/>
</dbReference>
<dbReference type="HOGENOM" id="CLU_028151_0_0_9"/>
<dbReference type="UniPathway" id="UPA00223">
    <property type="reaction ID" value="UER01008"/>
</dbReference>
<dbReference type="Proteomes" id="UP000002154">
    <property type="component" value="Chromosome"/>
</dbReference>
<dbReference type="GO" id="GO:0047545">
    <property type="term" value="F:2-hydroxyglutarate dehydrogenase activity"/>
    <property type="evidence" value="ECO:0007669"/>
    <property type="project" value="TreeGrafter"/>
</dbReference>
<dbReference type="GO" id="GO:0008924">
    <property type="term" value="F:L-malate dehydrogenase (quinone) activity"/>
    <property type="evidence" value="ECO:0007669"/>
    <property type="project" value="UniProtKB-UniRule"/>
</dbReference>
<dbReference type="GO" id="GO:0006099">
    <property type="term" value="P:tricarboxylic acid cycle"/>
    <property type="evidence" value="ECO:0007669"/>
    <property type="project" value="UniProtKB-UniRule"/>
</dbReference>
<dbReference type="HAMAP" id="MF_00212">
    <property type="entry name" value="MQO"/>
    <property type="match status" value="1"/>
</dbReference>
<dbReference type="InterPro" id="IPR036188">
    <property type="entry name" value="FAD/NAD-bd_sf"/>
</dbReference>
<dbReference type="InterPro" id="IPR006231">
    <property type="entry name" value="MQO"/>
</dbReference>
<dbReference type="NCBIfam" id="TIGR01320">
    <property type="entry name" value="mal_quin_oxido"/>
    <property type="match status" value="1"/>
</dbReference>
<dbReference type="NCBIfam" id="NF003603">
    <property type="entry name" value="PRK05257.1-1"/>
    <property type="match status" value="1"/>
</dbReference>
<dbReference type="NCBIfam" id="NF003604">
    <property type="entry name" value="PRK05257.1-3"/>
    <property type="match status" value="1"/>
</dbReference>
<dbReference type="NCBIfam" id="NF003605">
    <property type="entry name" value="PRK05257.1-4"/>
    <property type="match status" value="1"/>
</dbReference>
<dbReference type="NCBIfam" id="NF003606">
    <property type="entry name" value="PRK05257.2-1"/>
    <property type="match status" value="1"/>
</dbReference>
<dbReference type="NCBIfam" id="NF003608">
    <property type="entry name" value="PRK05257.2-4"/>
    <property type="match status" value="1"/>
</dbReference>
<dbReference type="NCBIfam" id="NF003610">
    <property type="entry name" value="PRK05257.3-1"/>
    <property type="match status" value="1"/>
</dbReference>
<dbReference type="NCBIfam" id="NF003611">
    <property type="entry name" value="PRK05257.3-2"/>
    <property type="match status" value="1"/>
</dbReference>
<dbReference type="NCBIfam" id="NF009875">
    <property type="entry name" value="PRK13339.1"/>
    <property type="match status" value="1"/>
</dbReference>
<dbReference type="PANTHER" id="PTHR43104">
    <property type="entry name" value="L-2-HYDROXYGLUTARATE DEHYDROGENASE, MITOCHONDRIAL"/>
    <property type="match status" value="1"/>
</dbReference>
<dbReference type="PANTHER" id="PTHR43104:SF2">
    <property type="entry name" value="L-2-HYDROXYGLUTARATE DEHYDROGENASE, MITOCHONDRIAL"/>
    <property type="match status" value="1"/>
</dbReference>
<dbReference type="Pfam" id="PF06039">
    <property type="entry name" value="Mqo"/>
    <property type="match status" value="1"/>
</dbReference>
<dbReference type="SUPFAM" id="SSF51905">
    <property type="entry name" value="FAD/NAD(P)-binding domain"/>
    <property type="match status" value="1"/>
</dbReference>
<name>MQO_BACMK</name>
<gene>
    <name evidence="1" type="primary">mqo</name>
    <name type="ordered locus">BcerKBAB4_2768</name>
</gene>
<comment type="catalytic activity">
    <reaction evidence="1">
        <text>(S)-malate + a quinone = a quinol + oxaloacetate</text>
        <dbReference type="Rhea" id="RHEA:46012"/>
        <dbReference type="ChEBI" id="CHEBI:15589"/>
        <dbReference type="ChEBI" id="CHEBI:16452"/>
        <dbReference type="ChEBI" id="CHEBI:24646"/>
        <dbReference type="ChEBI" id="CHEBI:132124"/>
        <dbReference type="EC" id="1.1.5.4"/>
    </reaction>
</comment>
<comment type="cofactor">
    <cofactor evidence="1">
        <name>FAD</name>
        <dbReference type="ChEBI" id="CHEBI:57692"/>
    </cofactor>
</comment>
<comment type="pathway">
    <text evidence="1">Carbohydrate metabolism; tricarboxylic acid cycle; oxaloacetate from (S)-malate (quinone route): step 1/1.</text>
</comment>
<comment type="similarity">
    <text evidence="1">Belongs to the MQO family.</text>
</comment>
<proteinExistence type="inferred from homology"/>
<keyword id="KW-0274">FAD</keyword>
<keyword id="KW-0285">Flavoprotein</keyword>
<keyword id="KW-0560">Oxidoreductase</keyword>
<keyword id="KW-0816">Tricarboxylic acid cycle</keyword>
<evidence type="ECO:0000255" key="1">
    <source>
        <dbReference type="HAMAP-Rule" id="MF_00212"/>
    </source>
</evidence>
<organism>
    <name type="scientific">Bacillus mycoides (strain KBAB4)</name>
    <name type="common">Bacillus weihenstephanensis</name>
    <dbReference type="NCBI Taxonomy" id="315730"/>
    <lineage>
        <taxon>Bacteria</taxon>
        <taxon>Bacillati</taxon>
        <taxon>Bacillota</taxon>
        <taxon>Bacilli</taxon>
        <taxon>Bacillales</taxon>
        <taxon>Bacillaceae</taxon>
        <taxon>Bacillus</taxon>
        <taxon>Bacillus cereus group</taxon>
    </lineage>
</organism>
<accession>A9VJG1</accession>
<sequence>MSNMQQKTDVILIGAGIMSATLGSLLKELAPEWEIKVFEKLANAGEESSNEWNNAGTGHSALCELNYTSEKSDGSIDIGKAVKVNEQFQLSRQFWAYLVKRNLIRNPQDFIMPLPHMSLVQGEKNVEFLKKRFEALSKNALFQGMEFADAPDTLKKWLPLIMEGRNSNEPMAATKIDSGTDVNFGALTRMLFDYLKTKNVELNYKHSVENIKRAKNGLWEVKVHDMNSGKIEHHTAKFVFIGGGGGSLPLLQKTGIPESKHIGGFPVSGLFMVCKNQKIVEQHHAKVYGKAKVGAPPMSVPHLDTRYIDNKKALLFGPFAGFSPKFLKTGSNLDLIGSVKPNNVLTMLAAGVKEMGLTKYLIQQVMLSHEKRMEELREFIPNAKSEDWDTVVAGQRVQVIKDTDAGGKGTLQFGTEVVSANDGSIAALLGASPGASTAVHVMLEVLEKCFPERILEWEPKIKEMVPSYGVSLTENPRLFQELHASTGRTLGLNEKEAVHN</sequence>
<reference key="1">
    <citation type="journal article" date="2008" name="Chem. Biol. Interact.">
        <title>Extending the Bacillus cereus group genomics to putative food-borne pathogens of different toxicity.</title>
        <authorList>
            <person name="Lapidus A."/>
            <person name="Goltsman E."/>
            <person name="Auger S."/>
            <person name="Galleron N."/>
            <person name="Segurens B."/>
            <person name="Dossat C."/>
            <person name="Land M.L."/>
            <person name="Broussolle V."/>
            <person name="Brillard J."/>
            <person name="Guinebretiere M.-H."/>
            <person name="Sanchis V."/>
            <person name="Nguen-the C."/>
            <person name="Lereclus D."/>
            <person name="Richardson P."/>
            <person name="Wincker P."/>
            <person name="Weissenbach J."/>
            <person name="Ehrlich S.D."/>
            <person name="Sorokin A."/>
        </authorList>
    </citation>
    <scope>NUCLEOTIDE SEQUENCE [LARGE SCALE GENOMIC DNA]</scope>
    <source>
        <strain>KBAB4</strain>
    </source>
</reference>
<protein>
    <recommendedName>
        <fullName evidence="1">Probable malate:quinone oxidoreductase</fullName>
        <ecNumber evidence="1">1.1.5.4</ecNumber>
    </recommendedName>
    <alternativeName>
        <fullName evidence="1">MQO</fullName>
    </alternativeName>
    <alternativeName>
        <fullName evidence="1">Malate dehydrogenase [quinone]</fullName>
    </alternativeName>
</protein>
<feature type="chain" id="PRO_1000099868" description="Probable malate:quinone oxidoreductase">
    <location>
        <begin position="1"/>
        <end position="500"/>
    </location>
</feature>